<dbReference type="EMBL" id="AF495658">
    <property type="protein sequence ID" value="AAM18517.1"/>
    <property type="molecule type" value="mRNA"/>
</dbReference>
<dbReference type="RefSeq" id="XP_004064841.1">
    <property type="nucleotide sequence ID" value="XM_004064793.5"/>
</dbReference>
<dbReference type="SMR" id="Q8SPF0"/>
<dbReference type="FunCoup" id="Q8SPF0">
    <property type="interactions" value="427"/>
</dbReference>
<dbReference type="STRING" id="9593.ENSGGOP00000002288"/>
<dbReference type="Ensembl" id="ENSGGOT00000002338.3">
    <property type="protein sequence ID" value="ENSGGOP00000002288.2"/>
    <property type="gene ID" value="ENSGGOG00000002327.3"/>
</dbReference>
<dbReference type="GeneID" id="101144612"/>
<dbReference type="KEGG" id="ggo:101144612"/>
<dbReference type="CTD" id="4694"/>
<dbReference type="eggNOG" id="ENOG502S3S5">
    <property type="taxonomic scope" value="Eukaryota"/>
</dbReference>
<dbReference type="GeneTree" id="ENSGT00390000007560"/>
<dbReference type="HOGENOM" id="CLU_185502_2_0_1"/>
<dbReference type="InParanoid" id="Q8SPF0"/>
<dbReference type="OMA" id="WALMERD"/>
<dbReference type="Proteomes" id="UP000001519">
    <property type="component" value="Chromosome X"/>
</dbReference>
<dbReference type="Bgee" id="ENSGGOG00000002327">
    <property type="expression patterns" value="Expressed in heart and 6 other cell types or tissues"/>
</dbReference>
<dbReference type="GO" id="GO:0005743">
    <property type="term" value="C:mitochondrial inner membrane"/>
    <property type="evidence" value="ECO:0007669"/>
    <property type="project" value="UniProtKB-SubCell"/>
</dbReference>
<dbReference type="GO" id="GO:0045271">
    <property type="term" value="C:respiratory chain complex I"/>
    <property type="evidence" value="ECO:0000250"/>
    <property type="project" value="UniProtKB"/>
</dbReference>
<dbReference type="InterPro" id="IPR017384">
    <property type="entry name" value="NADH_Ub_cplx-1_asu_su-1"/>
</dbReference>
<dbReference type="PANTHER" id="PTHR17098:SF2">
    <property type="entry name" value="NADH DEHYDROGENASE [UBIQUINONE] 1 ALPHA SUBCOMPLEX SUBUNIT 1"/>
    <property type="match status" value="1"/>
</dbReference>
<dbReference type="PANTHER" id="PTHR17098">
    <property type="entry name" value="NADH-UBIQUINONE OXIDOREDUCTASE MWFE SUBUNIT"/>
    <property type="match status" value="1"/>
</dbReference>
<dbReference type="Pfam" id="PF15879">
    <property type="entry name" value="MWFE"/>
    <property type="match status" value="1"/>
</dbReference>
<dbReference type="PIRSF" id="PIRSF038095">
    <property type="entry name" value="NDUA1"/>
    <property type="match status" value="1"/>
</dbReference>
<sequence length="70" mass="8099">MWFEILPGLSVMGVCLLIPGLATAYIHRFTNGGKEKRVAHFGYHWNLMERDRRISGVDRYYVSKGLENID</sequence>
<reference key="1">
    <citation type="journal article" date="2002" name="J. Biol. Chem.">
        <title>Species-specific and mutant MWFE proteins. Their effect on the assembly of a functional mammalian mitochondrial complex I.</title>
        <authorList>
            <person name="Yadava N."/>
            <person name="Potluri P."/>
            <person name="Smith E.N."/>
            <person name="Bisevac A."/>
            <person name="Scheffler I.E."/>
        </authorList>
    </citation>
    <scope>NUCLEOTIDE SEQUENCE [MRNA]</scope>
</reference>
<comment type="function">
    <text evidence="1">Accessory subunit of the mitochondrial membrane respiratory chain NADH dehydrogenase (Complex I), that is believed not to be involved in catalysis. Complex I functions in the transfer of electrons from NADH to the respiratory chain. The immediate electron acceptor for the enzyme is believed to be ubiquinone.</text>
</comment>
<comment type="subunit">
    <text evidence="1">Complex I is composed of 45 different subunits.</text>
</comment>
<comment type="subcellular location">
    <subcellularLocation>
        <location evidence="1">Mitochondrion inner membrane</location>
        <topology evidence="2">Single-pass membrane protein</topology>
        <orientation evidence="1">Matrix side</orientation>
    </subcellularLocation>
</comment>
<comment type="similarity">
    <text evidence="3">Belongs to the complex I NDUFA1 subunit family.</text>
</comment>
<name>NDUA1_GORGO</name>
<feature type="chain" id="PRO_0000118816" description="NADH dehydrogenase [ubiquinone] 1 alpha subcomplex subunit 1">
    <location>
        <begin position="1"/>
        <end position="70"/>
    </location>
</feature>
<feature type="transmembrane region" description="Helical" evidence="2">
    <location>
        <begin position="1"/>
        <end position="21"/>
    </location>
</feature>
<proteinExistence type="inferred from homology"/>
<keyword id="KW-0249">Electron transport</keyword>
<keyword id="KW-0472">Membrane</keyword>
<keyword id="KW-0496">Mitochondrion</keyword>
<keyword id="KW-0999">Mitochondrion inner membrane</keyword>
<keyword id="KW-1185">Reference proteome</keyword>
<keyword id="KW-0679">Respiratory chain</keyword>
<keyword id="KW-0812">Transmembrane</keyword>
<keyword id="KW-1133">Transmembrane helix</keyword>
<keyword id="KW-0813">Transport</keyword>
<evidence type="ECO:0000250" key="1">
    <source>
        <dbReference type="UniProtKB" id="O15239"/>
    </source>
</evidence>
<evidence type="ECO:0000255" key="2"/>
<evidence type="ECO:0000305" key="3"/>
<accession>Q8SPF0</accession>
<organism>
    <name type="scientific">Gorilla gorilla gorilla</name>
    <name type="common">Western lowland gorilla</name>
    <dbReference type="NCBI Taxonomy" id="9595"/>
    <lineage>
        <taxon>Eukaryota</taxon>
        <taxon>Metazoa</taxon>
        <taxon>Chordata</taxon>
        <taxon>Craniata</taxon>
        <taxon>Vertebrata</taxon>
        <taxon>Euteleostomi</taxon>
        <taxon>Mammalia</taxon>
        <taxon>Eutheria</taxon>
        <taxon>Euarchontoglires</taxon>
        <taxon>Primates</taxon>
        <taxon>Haplorrhini</taxon>
        <taxon>Catarrhini</taxon>
        <taxon>Hominidae</taxon>
        <taxon>Gorilla</taxon>
    </lineage>
</organism>
<protein>
    <recommendedName>
        <fullName>NADH dehydrogenase [ubiquinone] 1 alpha subcomplex subunit 1</fullName>
    </recommendedName>
    <alternativeName>
        <fullName>Complex I-MWFE</fullName>
        <shortName>CI-MWFE</shortName>
    </alternativeName>
    <alternativeName>
        <fullName>NADH-ubiquinone oxidoreductase MWFE subunit</fullName>
    </alternativeName>
</protein>
<gene>
    <name type="primary">NDUFA1</name>
</gene>